<dbReference type="EMBL" id="L42023">
    <property type="protein sequence ID" value="AAC22631.1"/>
    <property type="molecule type" value="Genomic_DNA"/>
</dbReference>
<dbReference type="PIR" id="E64105">
    <property type="entry name" value="E64105"/>
</dbReference>
<dbReference type="RefSeq" id="NP_439132.1">
    <property type="nucleotide sequence ID" value="NC_000907.1"/>
</dbReference>
<dbReference type="SMR" id="P43874"/>
<dbReference type="STRING" id="71421.HI_0971"/>
<dbReference type="EnsemblBacteria" id="AAC22631">
    <property type="protein sequence ID" value="AAC22631"/>
    <property type="gene ID" value="HI_0971"/>
</dbReference>
<dbReference type="KEGG" id="hin:HI_0971"/>
<dbReference type="PATRIC" id="fig|71421.8.peg.1012"/>
<dbReference type="eggNOG" id="COG0511">
    <property type="taxonomic scope" value="Bacteria"/>
</dbReference>
<dbReference type="HOGENOM" id="CLU_016733_3_1_6"/>
<dbReference type="OrthoDB" id="9811735at2"/>
<dbReference type="PhylomeDB" id="P43874"/>
<dbReference type="BioCyc" id="HINF71421:G1GJ1-1012-MONOMER"/>
<dbReference type="UniPathway" id="UPA00094"/>
<dbReference type="Proteomes" id="UP000000579">
    <property type="component" value="Chromosome"/>
</dbReference>
<dbReference type="GO" id="GO:0009317">
    <property type="term" value="C:acetyl-CoA carboxylase complex"/>
    <property type="evidence" value="ECO:0007669"/>
    <property type="project" value="InterPro"/>
</dbReference>
<dbReference type="GO" id="GO:0003989">
    <property type="term" value="F:acetyl-CoA carboxylase activity"/>
    <property type="evidence" value="ECO:0000318"/>
    <property type="project" value="GO_Central"/>
</dbReference>
<dbReference type="GO" id="GO:0006633">
    <property type="term" value="P:fatty acid biosynthetic process"/>
    <property type="evidence" value="ECO:0000318"/>
    <property type="project" value="GO_Central"/>
</dbReference>
<dbReference type="CDD" id="cd06850">
    <property type="entry name" value="biotinyl_domain"/>
    <property type="match status" value="1"/>
</dbReference>
<dbReference type="FunFam" id="2.40.50.100:FF:000003">
    <property type="entry name" value="Acetyl-CoA carboxylase biotin carboxyl carrier protein"/>
    <property type="match status" value="1"/>
</dbReference>
<dbReference type="Gene3D" id="2.40.50.100">
    <property type="match status" value="1"/>
</dbReference>
<dbReference type="InterPro" id="IPR001249">
    <property type="entry name" value="AcCoA_biotinCC"/>
</dbReference>
<dbReference type="InterPro" id="IPR001882">
    <property type="entry name" value="Biotin_BS"/>
</dbReference>
<dbReference type="InterPro" id="IPR050709">
    <property type="entry name" value="Biotin_Carboxyl_Carrier/Decarb"/>
</dbReference>
<dbReference type="InterPro" id="IPR000089">
    <property type="entry name" value="Biotin_lipoyl"/>
</dbReference>
<dbReference type="InterPro" id="IPR011053">
    <property type="entry name" value="Single_hybrid_motif"/>
</dbReference>
<dbReference type="NCBIfam" id="TIGR00531">
    <property type="entry name" value="BCCP"/>
    <property type="match status" value="1"/>
</dbReference>
<dbReference type="PANTHER" id="PTHR45266">
    <property type="entry name" value="OXALOACETATE DECARBOXYLASE ALPHA CHAIN"/>
    <property type="match status" value="1"/>
</dbReference>
<dbReference type="PANTHER" id="PTHR45266:SF3">
    <property type="entry name" value="OXALOACETATE DECARBOXYLASE ALPHA CHAIN"/>
    <property type="match status" value="1"/>
</dbReference>
<dbReference type="Pfam" id="PF00364">
    <property type="entry name" value="Biotin_lipoyl"/>
    <property type="match status" value="1"/>
</dbReference>
<dbReference type="PRINTS" id="PR01071">
    <property type="entry name" value="ACOABIOTINCC"/>
</dbReference>
<dbReference type="SUPFAM" id="SSF51230">
    <property type="entry name" value="Single hybrid motif"/>
    <property type="match status" value="1"/>
</dbReference>
<dbReference type="PROSITE" id="PS00188">
    <property type="entry name" value="BIOTIN"/>
    <property type="match status" value="1"/>
</dbReference>
<dbReference type="PROSITE" id="PS50968">
    <property type="entry name" value="BIOTINYL_LIPOYL"/>
    <property type="match status" value="1"/>
</dbReference>
<feature type="chain" id="PRO_0000146808" description="Biotin carboxyl carrier protein of acetyl-CoA carboxylase">
    <location>
        <begin position="1"/>
        <end position="155"/>
    </location>
</feature>
<feature type="domain" description="Biotinyl-binding" evidence="2">
    <location>
        <begin position="72"/>
        <end position="155"/>
    </location>
</feature>
<feature type="modified residue" description="N6-biotinyllysine" evidence="1 2">
    <location>
        <position position="121"/>
    </location>
</feature>
<name>BCCP_HAEIN</name>
<reference key="1">
    <citation type="journal article" date="1995" name="Science">
        <title>Whole-genome random sequencing and assembly of Haemophilus influenzae Rd.</title>
        <authorList>
            <person name="Fleischmann R.D."/>
            <person name="Adams M.D."/>
            <person name="White O."/>
            <person name="Clayton R.A."/>
            <person name="Kirkness E.F."/>
            <person name="Kerlavage A.R."/>
            <person name="Bult C.J."/>
            <person name="Tomb J.-F."/>
            <person name="Dougherty B.A."/>
            <person name="Merrick J.M."/>
            <person name="McKenney K."/>
            <person name="Sutton G.G."/>
            <person name="FitzHugh W."/>
            <person name="Fields C.A."/>
            <person name="Gocayne J.D."/>
            <person name="Scott J.D."/>
            <person name="Shirley R."/>
            <person name="Liu L.-I."/>
            <person name="Glodek A."/>
            <person name="Kelley J.M."/>
            <person name="Weidman J.F."/>
            <person name="Phillips C.A."/>
            <person name="Spriggs T."/>
            <person name="Hedblom E."/>
            <person name="Cotton M.D."/>
            <person name="Utterback T.R."/>
            <person name="Hanna M.C."/>
            <person name="Nguyen D.T."/>
            <person name="Saudek D.M."/>
            <person name="Brandon R.C."/>
            <person name="Fine L.D."/>
            <person name="Fritchman J.L."/>
            <person name="Fuhrmann J.L."/>
            <person name="Geoghagen N.S.M."/>
            <person name="Gnehm C.L."/>
            <person name="McDonald L.A."/>
            <person name="Small K.V."/>
            <person name="Fraser C.M."/>
            <person name="Smith H.O."/>
            <person name="Venter J.C."/>
        </authorList>
    </citation>
    <scope>NUCLEOTIDE SEQUENCE [LARGE SCALE GENOMIC DNA]</scope>
    <source>
        <strain>ATCC 51907 / DSM 11121 / KW20 / Rd</strain>
    </source>
</reference>
<reference key="2">
    <citation type="journal article" date="2000" name="Electrophoresis">
        <title>Two-dimensional map of the proteome of Haemophilus influenzae.</title>
        <authorList>
            <person name="Langen H."/>
            <person name="Takacs B."/>
            <person name="Evers S."/>
            <person name="Berndt P."/>
            <person name="Lahm H.W."/>
            <person name="Wipf B."/>
            <person name="Gray C."/>
            <person name="Fountoulakis M."/>
        </authorList>
    </citation>
    <scope>PROTEIN SEQUENCE OF 1-10</scope>
    <source>
        <strain>ATCC 51907 / DSM 11121 / KW20 / Rd</strain>
    </source>
</reference>
<evidence type="ECO:0000250" key="1"/>
<evidence type="ECO:0000255" key="2">
    <source>
        <dbReference type="PROSITE-ProRule" id="PRU01066"/>
    </source>
</evidence>
<keyword id="KW-0092">Biotin</keyword>
<keyword id="KW-0903">Direct protein sequencing</keyword>
<keyword id="KW-0275">Fatty acid biosynthesis</keyword>
<keyword id="KW-0276">Fatty acid metabolism</keyword>
<keyword id="KW-0444">Lipid biosynthesis</keyword>
<keyword id="KW-0443">Lipid metabolism</keyword>
<keyword id="KW-1185">Reference proteome</keyword>
<organism>
    <name type="scientific">Haemophilus influenzae (strain ATCC 51907 / DSM 11121 / KW20 / Rd)</name>
    <dbReference type="NCBI Taxonomy" id="71421"/>
    <lineage>
        <taxon>Bacteria</taxon>
        <taxon>Pseudomonadati</taxon>
        <taxon>Pseudomonadota</taxon>
        <taxon>Gammaproteobacteria</taxon>
        <taxon>Pasteurellales</taxon>
        <taxon>Pasteurellaceae</taxon>
        <taxon>Haemophilus</taxon>
    </lineage>
</organism>
<protein>
    <recommendedName>
        <fullName>Biotin carboxyl carrier protein of acetyl-CoA carboxylase</fullName>
        <shortName>BCCP</shortName>
    </recommendedName>
</protein>
<gene>
    <name type="primary">accB</name>
    <name type="synonym">fabE</name>
    <name type="ordered locus">HI_0971</name>
</gene>
<proteinExistence type="evidence at protein level"/>
<accession>P43874</accession>
<comment type="function">
    <text evidence="1">This protein is a component of the acetyl coenzyme A carboxylase complex; first, biotin carboxylase catalyzes the carboxylation of the carrier protein and then the transcarboxylase transfers the carboxyl group to form malonyl-CoA.</text>
</comment>
<comment type="pathway">
    <text>Lipid metabolism; fatty acid biosynthesis.</text>
</comment>
<comment type="subunit">
    <text evidence="1">Homodimer.</text>
</comment>
<sequence length="155" mass="16247">MDIRKIKKLIELVEESGITELEVQEEEGTVRISRAAPVIAPAAVQYAAAPVVAPTPAAAPAQVPAAATTAPAASDELSGHLVRSPMVGTFYRSPSPEAKAFVEVGQSVKVGDALCIVEAMKMMNRIEADKAGVVKAILINDGNAVEFDEPLIVIE</sequence>